<organism>
    <name type="scientific">Influenza A virus (strain A/Brevig Mission/1/1918 H1N1)</name>
    <name type="common">Influenza A virus (strain A/South Carolina/1/1918 H1N1)</name>
    <dbReference type="NCBI Taxonomy" id="88776"/>
    <lineage>
        <taxon>Viruses</taxon>
        <taxon>Riboviria</taxon>
        <taxon>Orthornavirae</taxon>
        <taxon>Negarnaviricota</taxon>
        <taxon>Polyploviricotina</taxon>
        <taxon>Insthoviricetes</taxon>
        <taxon>Articulavirales</taxon>
        <taxon>Orthomyxoviridae</taxon>
        <taxon>Alphainfluenzavirus</taxon>
        <taxon>Alphainfluenzavirus influenzae</taxon>
        <taxon>Influenza A virus</taxon>
    </lineage>
</organism>
<gene>
    <name evidence="2" type="primary">PB2</name>
</gene>
<dbReference type="EMBL" id="DQ208309">
    <property type="protein sequence ID" value="ABA55038.1"/>
    <property type="molecule type" value="mRNA"/>
</dbReference>
<dbReference type="PDB" id="7NHA">
    <property type="method" value="EM"/>
    <property type="resolution" value="2.91 A"/>
    <property type="chains" value="C=1-759"/>
</dbReference>
<dbReference type="PDB" id="7NHC">
    <property type="method" value="EM"/>
    <property type="resolution" value="2.87 A"/>
    <property type="chains" value="C=1-759"/>
</dbReference>
<dbReference type="PDB" id="7NHX">
    <property type="method" value="EM"/>
    <property type="resolution" value="3.23 A"/>
    <property type="chains" value="C=1-759"/>
</dbReference>
<dbReference type="PDB" id="7NI0">
    <property type="method" value="EM"/>
    <property type="resolution" value="3.32 A"/>
    <property type="chains" value="C=1-759"/>
</dbReference>
<dbReference type="PDB" id="7NIK">
    <property type="method" value="EM"/>
    <property type="resolution" value="6.20 A"/>
    <property type="chains" value="C=1-759"/>
</dbReference>
<dbReference type="PDB" id="7NIL">
    <property type="method" value="EM"/>
    <property type="resolution" value="5.01 A"/>
    <property type="chains" value="C=1-759"/>
</dbReference>
<dbReference type="PDB" id="7NIR">
    <property type="method" value="EM"/>
    <property type="resolution" value="6.70 A"/>
    <property type="chains" value="C=1-759"/>
</dbReference>
<dbReference type="PDB" id="7NIS">
    <property type="method" value="EM"/>
    <property type="resolution" value="5.96 A"/>
    <property type="chains" value="C=1-759"/>
</dbReference>
<dbReference type="PDB" id="7NJ3">
    <property type="method" value="EM"/>
    <property type="resolution" value="4.48 A"/>
    <property type="chains" value="C=1-759"/>
</dbReference>
<dbReference type="PDB" id="7NJ4">
    <property type="method" value="EM"/>
    <property type="resolution" value="5.84 A"/>
    <property type="chains" value="C=1-759"/>
</dbReference>
<dbReference type="PDB" id="7NJ5">
    <property type="method" value="EM"/>
    <property type="resolution" value="4.63 A"/>
    <property type="chains" value="C=1-759"/>
</dbReference>
<dbReference type="PDB" id="7NJ7">
    <property type="method" value="EM"/>
    <property type="resolution" value="4.82 A"/>
    <property type="chains" value="C=1-759"/>
</dbReference>
<dbReference type="PDB" id="7NK1">
    <property type="method" value="EM"/>
    <property type="resolution" value="4.22 A"/>
    <property type="chains" value="C=1-759"/>
</dbReference>
<dbReference type="PDB" id="7NK2">
    <property type="method" value="EM"/>
    <property type="resolution" value="4.84 A"/>
    <property type="chains" value="C=1-759"/>
</dbReference>
<dbReference type="PDB" id="7NK4">
    <property type="method" value="EM"/>
    <property type="resolution" value="5.32 A"/>
    <property type="chains" value="C=1-759"/>
</dbReference>
<dbReference type="PDB" id="7NK6">
    <property type="method" value="EM"/>
    <property type="resolution" value="6.72 A"/>
    <property type="chains" value="C=1-759"/>
</dbReference>
<dbReference type="PDB" id="7NK8">
    <property type="method" value="EM"/>
    <property type="resolution" value="5.34 A"/>
    <property type="chains" value="C=1-759"/>
</dbReference>
<dbReference type="PDB" id="7NKA">
    <property type="method" value="EM"/>
    <property type="resolution" value="4.07 A"/>
    <property type="chains" value="C=1-759"/>
</dbReference>
<dbReference type="PDB" id="7NKC">
    <property type="method" value="EM"/>
    <property type="resolution" value="4.46 A"/>
    <property type="chains" value="C=1-759"/>
</dbReference>
<dbReference type="PDB" id="7NKI">
    <property type="method" value="EM"/>
    <property type="resolution" value="4.67 A"/>
    <property type="chains" value="C=1-759"/>
</dbReference>
<dbReference type="PDB" id="7NKR">
    <property type="method" value="EM"/>
    <property type="resolution" value="5.60 A"/>
    <property type="chains" value="C=1-759"/>
</dbReference>
<dbReference type="PDB" id="8R60">
    <property type="method" value="EM"/>
    <property type="resolution" value="3.23 A"/>
    <property type="chains" value="C=1-759"/>
</dbReference>
<dbReference type="PDB" id="8R65">
    <property type="method" value="EM"/>
    <property type="resolution" value="4.23 A"/>
    <property type="chains" value="C=1-759"/>
</dbReference>
<dbReference type="PDBsum" id="7NHA"/>
<dbReference type="PDBsum" id="7NHC"/>
<dbReference type="PDBsum" id="7NHX"/>
<dbReference type="PDBsum" id="7NI0"/>
<dbReference type="PDBsum" id="7NIK"/>
<dbReference type="PDBsum" id="7NIL"/>
<dbReference type="PDBsum" id="7NIR"/>
<dbReference type="PDBsum" id="7NIS"/>
<dbReference type="PDBsum" id="7NJ3"/>
<dbReference type="PDBsum" id="7NJ4"/>
<dbReference type="PDBsum" id="7NJ5"/>
<dbReference type="PDBsum" id="7NJ7"/>
<dbReference type="PDBsum" id="7NK1"/>
<dbReference type="PDBsum" id="7NK2"/>
<dbReference type="PDBsum" id="7NK4"/>
<dbReference type="PDBsum" id="7NK6"/>
<dbReference type="PDBsum" id="7NK8"/>
<dbReference type="PDBsum" id="7NKA"/>
<dbReference type="PDBsum" id="7NKC"/>
<dbReference type="PDBsum" id="7NKI"/>
<dbReference type="PDBsum" id="7NKR"/>
<dbReference type="PDBsum" id="8R60"/>
<dbReference type="PDBsum" id="8R65"/>
<dbReference type="EMDB" id="EMD-12430"/>
<dbReference type="EMDB" id="EMD-12431"/>
<dbReference type="EMDB" id="EMD-12433"/>
<dbReference type="EMDB" id="EMD-12435"/>
<dbReference type="EMDB" id="EMD-12437"/>
<dbReference type="EMDB" id="EMD-12440"/>
<dbReference type="EMDB" id="EMD-12447"/>
<dbReference type="EMDB" id="EMD-18945"/>
<dbReference type="EMDB" id="EMD-18947"/>
<dbReference type="SMR" id="Q3HM41"/>
<dbReference type="PRO" id="PR:Q3HM41"/>
<dbReference type="Proteomes" id="UP000008430">
    <property type="component" value="Genome"/>
</dbReference>
<dbReference type="GO" id="GO:0033650">
    <property type="term" value="C:host cell mitochondrion"/>
    <property type="evidence" value="ECO:0007669"/>
    <property type="project" value="UniProtKB-SubCell"/>
</dbReference>
<dbReference type="GO" id="GO:0042025">
    <property type="term" value="C:host cell nucleus"/>
    <property type="evidence" value="ECO:0007669"/>
    <property type="project" value="UniProtKB-SubCell"/>
</dbReference>
<dbReference type="GO" id="GO:0044423">
    <property type="term" value="C:virion component"/>
    <property type="evidence" value="ECO:0007669"/>
    <property type="project" value="UniProtKB-UniRule"/>
</dbReference>
<dbReference type="GO" id="GO:0003723">
    <property type="term" value="F:RNA binding"/>
    <property type="evidence" value="ECO:0007669"/>
    <property type="project" value="UniProtKB-UniRule"/>
</dbReference>
<dbReference type="GO" id="GO:0003968">
    <property type="term" value="F:RNA-directed RNA polymerase activity"/>
    <property type="evidence" value="ECO:0007669"/>
    <property type="project" value="UniProtKB-UniRule"/>
</dbReference>
<dbReference type="GO" id="GO:0006370">
    <property type="term" value="P:7-methylguanosine mRNA capping"/>
    <property type="evidence" value="ECO:0007669"/>
    <property type="project" value="UniProtKB-UniRule"/>
</dbReference>
<dbReference type="GO" id="GO:0075526">
    <property type="term" value="P:cap snatching"/>
    <property type="evidence" value="ECO:0007669"/>
    <property type="project" value="UniProtKB-UniRule"/>
</dbReference>
<dbReference type="GO" id="GO:0006351">
    <property type="term" value="P:DNA-templated transcription"/>
    <property type="evidence" value="ECO:0007669"/>
    <property type="project" value="UniProtKB-UniRule"/>
</dbReference>
<dbReference type="GO" id="GO:0039545">
    <property type="term" value="P:symbiont-mediated suppression of host cytoplasmic pattern recognition receptor signaling pathway via inhibition of MAVS activity"/>
    <property type="evidence" value="ECO:0007669"/>
    <property type="project" value="UniProtKB-UniRule"/>
</dbReference>
<dbReference type="GO" id="GO:0039657">
    <property type="term" value="P:symbiont-mediated suppression of host gene expression"/>
    <property type="evidence" value="ECO:0007669"/>
    <property type="project" value="UniProtKB-KW"/>
</dbReference>
<dbReference type="GO" id="GO:0039523">
    <property type="term" value="P:symbiont-mediated suppression of host mRNA transcription via inhibition of RNA polymerase II activity"/>
    <property type="evidence" value="ECO:0007669"/>
    <property type="project" value="UniProtKB-UniRule"/>
</dbReference>
<dbReference type="GO" id="GO:0039694">
    <property type="term" value="P:viral RNA genome replication"/>
    <property type="evidence" value="ECO:0007669"/>
    <property type="project" value="InterPro"/>
</dbReference>
<dbReference type="FunFam" id="3.30.30.90:FF:000001">
    <property type="entry name" value="Polymerase basic protein 2"/>
    <property type="match status" value="1"/>
</dbReference>
<dbReference type="Gene3D" id="3.30.30.90">
    <property type="entry name" value="Polymerase Basic Protein 2, C-terminal domain"/>
    <property type="match status" value="1"/>
</dbReference>
<dbReference type="HAMAP" id="MF_04062">
    <property type="entry name" value="INV_PB2"/>
    <property type="match status" value="1"/>
</dbReference>
<dbReference type="InterPro" id="IPR049110">
    <property type="entry name" value="Flu_PB2_2nd"/>
</dbReference>
<dbReference type="InterPro" id="IPR049114">
    <property type="entry name" value="Flu_PB2_6th"/>
</dbReference>
<dbReference type="InterPro" id="IPR049115">
    <property type="entry name" value="Flu_PB2_C"/>
</dbReference>
<dbReference type="InterPro" id="IPR048298">
    <property type="entry name" value="Flu_PB2_CAP-bd"/>
</dbReference>
<dbReference type="InterPro" id="IPR049111">
    <property type="entry name" value="Flu_PB2_middle"/>
</dbReference>
<dbReference type="InterPro" id="IPR049106">
    <property type="entry name" value="Flu_PB2_N"/>
</dbReference>
<dbReference type="InterPro" id="IPR001591">
    <property type="entry name" value="INV_PB2"/>
</dbReference>
<dbReference type="InterPro" id="IPR049113">
    <property type="entry name" value="PB2_helical"/>
</dbReference>
<dbReference type="InterPro" id="IPR037258">
    <property type="entry name" value="PDB2_C"/>
</dbReference>
<dbReference type="Pfam" id="PF20947">
    <property type="entry name" value="Flu_PB2_1st"/>
    <property type="match status" value="1"/>
</dbReference>
<dbReference type="Pfam" id="PF20948">
    <property type="entry name" value="Flu_PB2_2nd"/>
    <property type="match status" value="1"/>
</dbReference>
<dbReference type="Pfam" id="PF20949">
    <property type="entry name" value="Flu_PB2_3rd"/>
    <property type="match status" value="1"/>
</dbReference>
<dbReference type="Pfam" id="PF20950">
    <property type="entry name" value="Flu_PB2_4th"/>
    <property type="match status" value="1"/>
</dbReference>
<dbReference type="Pfam" id="PF00604">
    <property type="entry name" value="Flu_PB2_5th"/>
    <property type="match status" value="1"/>
</dbReference>
<dbReference type="Pfam" id="PF20951">
    <property type="entry name" value="Flu_PB2_6th"/>
    <property type="match status" value="1"/>
</dbReference>
<dbReference type="Pfam" id="PF20952">
    <property type="entry name" value="Flu_PB2_7th"/>
    <property type="match status" value="1"/>
</dbReference>
<dbReference type="SUPFAM" id="SSF160453">
    <property type="entry name" value="PB2 C-terminal domain-like"/>
    <property type="match status" value="1"/>
</dbReference>
<reference key="1">
    <citation type="journal article" date="2005" name="Nature">
        <title>Characterization of the 1918 influenza virus polymerase genes.</title>
        <authorList>
            <person name="Taubenberger J.K."/>
            <person name="Reid A.H."/>
            <person name="Lourens R.M."/>
            <person name="Wang R."/>
            <person name="Jin G."/>
            <person name="Fanning T.G."/>
        </authorList>
    </citation>
    <scope>NUCLEOTIDE SEQUENCE [MRNA]</scope>
</reference>
<proteinExistence type="evidence at protein level"/>
<protein>
    <recommendedName>
        <fullName evidence="2">Polymerase basic protein 2</fullName>
    </recommendedName>
    <alternativeName>
        <fullName evidence="2">RNA-directed RNA polymerase subunit P3</fullName>
    </alternativeName>
</protein>
<name>PB2_I18A0</name>
<comment type="function">
    <text evidence="2">Plays an essential role in transcription initiation and cap-stealing mechanism, in which cellular capped pre-mRNAs are used to generate primers for viral transcription. Recognizes and binds the 7-methylguanosine-containing cap of the target pre-RNA which is subsequently cleaved after 10-13 nucleotides by the viral protein PA. Plays a role in the initiation of the viral genome replication and modulates the activity of the ribonucleoprotein (RNP) complex. In addition, participates in the inhibition of type I interferon induction through interaction with and inhibition of the host mitochondrial antiviral signaling protein MAVS.</text>
</comment>
<comment type="subunit">
    <text evidence="2">Influenza RNA polymerase is composed of three subunits: PB1, PB2 and PA. Interacts (via N-terminus) with PB1 (via C-terminus). Interacts with nucleoprotein NP (via N-terminus). Interacts (via N-terminus) with host MAVS (via N-terminus); this interaction inhibits host innate immune response.</text>
</comment>
<comment type="subcellular location">
    <subcellularLocation>
        <location evidence="2">Virion</location>
    </subcellularLocation>
    <subcellularLocation>
        <location evidence="2">Host nucleus</location>
    </subcellularLocation>
    <subcellularLocation>
        <location evidence="2">Host mitochondrion</location>
    </subcellularLocation>
</comment>
<comment type="alternative products">
    <event type="alternative splicing"/>
    <isoform>
        <id>Q3HM41-1</id>
        <name>Polymerase basic protein 2</name>
        <sequence type="displayed"/>
    </isoform>
    <isoform>
        <id>P0DOG7-1</id>
        <name evidence="1">PB2-S1</name>
        <sequence type="external"/>
    </isoform>
</comment>
<comment type="miscellaneous">
    <text>South Carolina isolate has been sequenced from formalid fixed-lung tissues of a 21-year-old male which died in 1918 at Ft. Jackson, SC. Brevig Mission isolate has been sequenced from lung tissues of an Inuit woman buried in the permafrost in a gravesite near Brevig Mission, Alaska. This sample was recovered by John Hultin, retired pathologist.</text>
</comment>
<comment type="similarity">
    <text evidence="2">Belongs to the influenza viruses PB2 family.</text>
</comment>
<evidence type="ECO:0000250" key="1">
    <source>
        <dbReference type="UniProtKB" id="P03427"/>
    </source>
</evidence>
<evidence type="ECO:0000255" key="2">
    <source>
        <dbReference type="HAMAP-Rule" id="MF_04062"/>
    </source>
</evidence>
<evidence type="ECO:0007829" key="3">
    <source>
        <dbReference type="PDB" id="7NHA"/>
    </source>
</evidence>
<evidence type="ECO:0007829" key="4">
    <source>
        <dbReference type="PDB" id="7NHC"/>
    </source>
</evidence>
<evidence type="ECO:0007829" key="5">
    <source>
        <dbReference type="PDB" id="7NHX"/>
    </source>
</evidence>
<evidence type="ECO:0007829" key="6">
    <source>
        <dbReference type="PDB" id="7NI0"/>
    </source>
</evidence>
<sequence length="759" mass="85938">MERIKELRDLMSQSRTREILTKTTVDHMAIIKKYTSGRQEKNPALRMKWMMAMKYPITADKRIMEMIPERNEQGQTLWSKTNDAGSDRVMVSPLAVTWWNRNGPTTSAVHYPKIYKTYFEKVERLKHGTFGPVHFRNQVKIRRRVDINPGHADLSAKEAQDVIMEVVFPNEVGARILTSESQLTITKEKKEELQDCKISPLMVAYMLERELVRKTRFLPVAGGTSSVYIEVLHLTQGTCWEQMYTPGGEVRNDDVDQSLIIAARNIVRRATVSADPLASLLEMCHSTQIGGIRMVDILRQNPTEEQAVDICKAAMGLRISSSFSFGGFTFKRTSGSSVKREEEVLTGNLQTLKIRVHEGYEEFTMVGRRATAILRKATRRLIQLIVSGRDEQSIAEAIIVAMVFSQEDCMIKAVRGDLNFVNRANQRLNPMHQLLRHFQKDAKVLFQNWGIEPIDNVMGMIGILPDMTPSTEMSMRGVRVSKMGVDEYSSTERVVVSIDRFLRVRDQRGNVLLSPEEVSETQGTEKLTITYSSSMMWEVNGPESVLVNTYQWIIRNWETVKIQWSQNPTMLYNKMEFEPFQSLVPKAARGQYSGFVRTLFQQMRDVLGTFDTVQIIKLLPFAAAPPKQSRMQFSSLTVNVRGSGMRILVRGNSPVFNYNKATKRLTVLGKDAGALTEDPDEGTAGVESAVLRGFLILGKEDRRYGPALSINELSNLAKGEKANVLIGQGDVVLVMKRKRDSSILTDSQTATKRIRMAIN</sequence>
<feature type="chain" id="PRO_0000310573" description="Polymerase basic protein 2">
    <location>
        <begin position="1"/>
        <end position="759"/>
    </location>
</feature>
<feature type="short sequence motif" description="Nuclear localization signal" evidence="2">
    <location>
        <begin position="736"/>
        <end position="739"/>
    </location>
</feature>
<feature type="site" description="Mammalian adaptation" evidence="2">
    <location>
        <position position="627"/>
    </location>
</feature>
<feature type="helix" evidence="4">
    <location>
        <begin position="2"/>
        <end position="12"/>
    </location>
</feature>
<feature type="helix" evidence="4">
    <location>
        <begin position="14"/>
        <end position="22"/>
    </location>
</feature>
<feature type="turn" evidence="4">
    <location>
        <begin position="25"/>
        <end position="27"/>
    </location>
</feature>
<feature type="helix" evidence="4">
    <location>
        <begin position="28"/>
        <end position="33"/>
    </location>
</feature>
<feature type="helix" evidence="4">
    <location>
        <begin position="43"/>
        <end position="50"/>
    </location>
</feature>
<feature type="strand" evidence="4">
    <location>
        <begin position="53"/>
        <end position="55"/>
    </location>
</feature>
<feature type="strand" evidence="4">
    <location>
        <begin position="57"/>
        <end position="59"/>
    </location>
</feature>
<feature type="helix" evidence="4">
    <location>
        <begin position="63"/>
        <end position="66"/>
    </location>
</feature>
<feature type="strand" evidence="4">
    <location>
        <begin position="78"/>
        <end position="82"/>
    </location>
</feature>
<feature type="strand" evidence="3">
    <location>
        <begin position="84"/>
        <end position="87"/>
    </location>
</feature>
<feature type="strand" evidence="4">
    <location>
        <begin position="89"/>
        <end position="91"/>
    </location>
</feature>
<feature type="helix" evidence="4">
    <location>
        <begin position="93"/>
        <end position="102"/>
    </location>
</feature>
<feature type="helix" evidence="3">
    <location>
        <begin position="108"/>
        <end position="110"/>
    </location>
</feature>
<feature type="helix" evidence="4">
    <location>
        <begin position="111"/>
        <end position="114"/>
    </location>
</feature>
<feature type="helix" evidence="4">
    <location>
        <begin position="116"/>
        <end position="126"/>
    </location>
</feature>
<feature type="strand" evidence="4">
    <location>
        <begin position="129"/>
        <end position="135"/>
    </location>
</feature>
<feature type="strand" evidence="4">
    <location>
        <begin position="141"/>
        <end position="146"/>
    </location>
</feature>
<feature type="helix" evidence="4">
    <location>
        <begin position="156"/>
        <end position="167"/>
    </location>
</feature>
<feature type="helix" evidence="4">
    <location>
        <begin position="169"/>
        <end position="171"/>
    </location>
</feature>
<feature type="helix" evidence="4">
    <location>
        <begin position="180"/>
        <end position="191"/>
    </location>
</feature>
<feature type="helix" evidence="4">
    <location>
        <begin position="200"/>
        <end position="211"/>
    </location>
</feature>
<feature type="strand" evidence="4">
    <location>
        <begin position="215"/>
        <end position="220"/>
    </location>
</feature>
<feature type="helix" evidence="4">
    <location>
        <begin position="226"/>
        <end position="229"/>
    </location>
</feature>
<feature type="helix" evidence="4">
    <location>
        <begin position="232"/>
        <end position="235"/>
    </location>
</feature>
<feature type="strand" evidence="4">
    <location>
        <begin position="238"/>
        <end position="245"/>
    </location>
</feature>
<feature type="helix" evidence="5">
    <location>
        <begin position="252"/>
        <end position="272"/>
    </location>
</feature>
<feature type="strand" evidence="5">
    <location>
        <begin position="273"/>
        <end position="275"/>
    </location>
</feature>
<feature type="helix" evidence="5">
    <location>
        <begin position="276"/>
        <end position="285"/>
    </location>
</feature>
<feature type="strand" evidence="6">
    <location>
        <begin position="286"/>
        <end position="289"/>
    </location>
</feature>
<feature type="helix" evidence="5">
    <location>
        <begin position="294"/>
        <end position="300"/>
    </location>
</feature>
<feature type="helix" evidence="5">
    <location>
        <begin position="306"/>
        <end position="314"/>
    </location>
</feature>
<feature type="strand" evidence="5">
    <location>
        <begin position="331"/>
        <end position="334"/>
    </location>
</feature>
<feature type="strand" evidence="5">
    <location>
        <begin position="342"/>
        <end position="345"/>
    </location>
</feature>
<feature type="strand" evidence="5">
    <location>
        <begin position="351"/>
        <end position="354"/>
    </location>
</feature>
<feature type="strand" evidence="5">
    <location>
        <begin position="361"/>
        <end position="366"/>
    </location>
</feature>
<feature type="strand" evidence="5">
    <location>
        <begin position="371"/>
        <end position="377"/>
    </location>
</feature>
<feature type="strand" evidence="5">
    <location>
        <begin position="380"/>
        <end position="386"/>
    </location>
</feature>
<feature type="helix" evidence="5">
    <location>
        <begin position="391"/>
        <end position="405"/>
    </location>
</feature>
<feature type="helix" evidence="5">
    <location>
        <begin position="408"/>
        <end position="411"/>
    </location>
</feature>
<feature type="helix" evidence="5">
    <location>
        <begin position="430"/>
        <end position="437"/>
    </location>
</feature>
<feature type="turn" evidence="5">
    <location>
        <begin position="438"/>
        <end position="440"/>
    </location>
</feature>
<feature type="helix" evidence="5">
    <location>
        <begin position="443"/>
        <end position="449"/>
    </location>
</feature>
<feature type="helix" evidence="5">
    <location>
        <begin position="457"/>
        <end position="459"/>
    </location>
</feature>
<feature type="strand" evidence="5">
    <location>
        <begin position="465"/>
        <end position="467"/>
    </location>
</feature>
<feature type="strand" evidence="5">
    <location>
        <begin position="471"/>
        <end position="478"/>
    </location>
</feature>
<feature type="strand" evidence="6">
    <location>
        <begin position="496"/>
        <end position="498"/>
    </location>
</feature>
<feature type="strand" evidence="5">
    <location>
        <begin position="507"/>
        <end position="509"/>
    </location>
</feature>
<feature type="strand" evidence="5">
    <location>
        <begin position="511"/>
        <end position="513"/>
    </location>
</feature>
<feature type="strand" evidence="6">
    <location>
        <begin position="529"/>
        <end position="531"/>
    </location>
</feature>
<feature type="turn" evidence="5">
    <location>
        <begin position="538"/>
        <end position="540"/>
    </location>
</feature>
<feature type="helix" evidence="5">
    <location>
        <begin position="542"/>
        <end position="555"/>
    </location>
</feature>
<feature type="helix" evidence="5">
    <location>
        <begin position="557"/>
        <end position="563"/>
    </location>
</feature>
<feature type="helix" evidence="5">
    <location>
        <begin position="569"/>
        <end position="572"/>
    </location>
</feature>
<feature type="helix" evidence="5">
    <location>
        <begin position="578"/>
        <end position="582"/>
    </location>
</feature>
<feature type="helix" evidence="5">
    <location>
        <begin position="588"/>
        <end position="605"/>
    </location>
</feature>
<feature type="helix" evidence="5">
    <location>
        <begin position="612"/>
        <end position="618"/>
    </location>
</feature>
<feature type="helix" evidence="5">
    <location>
        <begin position="619"/>
        <end position="621"/>
    </location>
</feature>
<feature type="strand" evidence="5">
    <location>
        <begin position="622"/>
        <end position="624"/>
    </location>
</feature>
<feature type="strand" evidence="5">
    <location>
        <begin position="634"/>
        <end position="640"/>
    </location>
</feature>
<feature type="strand" evidence="5">
    <location>
        <begin position="643"/>
        <end position="651"/>
    </location>
</feature>
<feature type="strand" evidence="5">
    <location>
        <begin position="660"/>
        <end position="662"/>
    </location>
</feature>
<feature type="strand" evidence="5">
    <location>
        <begin position="664"/>
        <end position="667"/>
    </location>
</feature>
<feature type="strand" evidence="5">
    <location>
        <begin position="670"/>
        <end position="674"/>
    </location>
</feature>
<keyword id="KW-0002">3D-structure</keyword>
<keyword id="KW-0025">Alternative splicing</keyword>
<keyword id="KW-1157">Cap snatching</keyword>
<keyword id="KW-1262">Eukaryotic host gene expression shutoff by virus</keyword>
<keyword id="KW-1191">Eukaryotic host transcription shutoff by virus</keyword>
<keyword id="KW-1190">Host gene expression shutoff by virus</keyword>
<keyword id="KW-1045">Host mitochondrion</keyword>
<keyword id="KW-1048">Host nucleus</keyword>
<keyword id="KW-0945">Host-virus interaction</keyword>
<keyword id="KW-1090">Inhibition of host innate immune response by virus</keyword>
<keyword id="KW-1097">Inhibition of host MAVS by virus</keyword>
<keyword id="KW-1113">Inhibition of host RLR pathway by virus</keyword>
<keyword id="KW-1104">Inhibition of host RNA polymerase II by virus</keyword>
<keyword id="KW-0506">mRNA capping</keyword>
<keyword id="KW-0507">mRNA processing</keyword>
<keyword id="KW-0899">Viral immunoevasion</keyword>
<keyword id="KW-1195">Viral transcription</keyword>
<keyword id="KW-0946">Virion</keyword>
<organismHost>
    <name type="scientific">Aves</name>
    <dbReference type="NCBI Taxonomy" id="8782"/>
</organismHost>
<organismHost>
    <name type="scientific">Homo sapiens</name>
    <name type="common">Human</name>
    <dbReference type="NCBI Taxonomy" id="9606"/>
</organismHost>
<organismHost>
    <name type="scientific">Sus scrofa</name>
    <name type="common">Pig</name>
    <dbReference type="NCBI Taxonomy" id="9823"/>
</organismHost>
<accession>Q3HM41</accession>